<sequence length="352" mass="41835">MDRTKTRFRKRGQITGKITTSRQPHPQNEQSLQRSTSGYPLQEVVDDEVLGPSAPGVDPSPPCRSLGWKRKKEWSDESEEEPEKELAPEPEETWVVEMLCGLKMKLKQQRVSPILPEHHKDFNSQLAPGVDPSPPHRSFCWKRKREWWDESEESLEEEPRKVLAPEPEEIWVAEMLCGLKMKLKRRRVSLVLPEHHEAFNRLLEDPVIKRFLAWDKDLRVSDKYLLAMVIAYFSRAGLPSWQYQRIHFFLALYLANDMEEDDEDPKQNIFYFLYGKTRSRIPLVRNRRFQLCRCLNPRARKNRSQIALFQKLRFQFFCSMSGRAWVSREELEEIQAYDPEHWVWARDRARLS</sequence>
<reference key="1">
    <citation type="journal article" date="2003" name="Nature">
        <title>The DNA sequence of human chromosome 7.</title>
        <authorList>
            <person name="Hillier L.W."/>
            <person name="Fulton R.S."/>
            <person name="Fulton L.A."/>
            <person name="Graves T.A."/>
            <person name="Pepin K.H."/>
            <person name="Wagner-McPherson C."/>
            <person name="Layman D."/>
            <person name="Maas J."/>
            <person name="Jaeger S."/>
            <person name="Walker R."/>
            <person name="Wylie K."/>
            <person name="Sekhon M."/>
            <person name="Becker M.C."/>
            <person name="O'Laughlin M.D."/>
            <person name="Schaller M.E."/>
            <person name="Fewell G.A."/>
            <person name="Delehaunty K.D."/>
            <person name="Miner T.L."/>
            <person name="Nash W.E."/>
            <person name="Cordes M."/>
            <person name="Du H."/>
            <person name="Sun H."/>
            <person name="Edwards J."/>
            <person name="Bradshaw-Cordum H."/>
            <person name="Ali J."/>
            <person name="Andrews S."/>
            <person name="Isak A."/>
            <person name="Vanbrunt A."/>
            <person name="Nguyen C."/>
            <person name="Du F."/>
            <person name="Lamar B."/>
            <person name="Courtney L."/>
            <person name="Kalicki J."/>
            <person name="Ozersky P."/>
            <person name="Bielicki L."/>
            <person name="Scott K."/>
            <person name="Holmes A."/>
            <person name="Harkins R."/>
            <person name="Harris A."/>
            <person name="Strong C.M."/>
            <person name="Hou S."/>
            <person name="Tomlinson C."/>
            <person name="Dauphin-Kohlberg S."/>
            <person name="Kozlowicz-Reilly A."/>
            <person name="Leonard S."/>
            <person name="Rohlfing T."/>
            <person name="Rock S.M."/>
            <person name="Tin-Wollam A.-M."/>
            <person name="Abbott A."/>
            <person name="Minx P."/>
            <person name="Maupin R."/>
            <person name="Strowmatt C."/>
            <person name="Latreille P."/>
            <person name="Miller N."/>
            <person name="Johnson D."/>
            <person name="Murray J."/>
            <person name="Woessner J.P."/>
            <person name="Wendl M.C."/>
            <person name="Yang S.-P."/>
            <person name="Schultz B.R."/>
            <person name="Wallis J.W."/>
            <person name="Spieth J."/>
            <person name="Bieri T.A."/>
            <person name="Nelson J.O."/>
            <person name="Berkowicz N."/>
            <person name="Wohldmann P.E."/>
            <person name="Cook L.L."/>
            <person name="Hickenbotham M.T."/>
            <person name="Eldred J."/>
            <person name="Williams D."/>
            <person name="Bedell J.A."/>
            <person name="Mardis E.R."/>
            <person name="Clifton S.W."/>
            <person name="Chissoe S.L."/>
            <person name="Marra M.A."/>
            <person name="Raymond C."/>
            <person name="Haugen E."/>
            <person name="Gillett W."/>
            <person name="Zhou Y."/>
            <person name="James R."/>
            <person name="Phelps K."/>
            <person name="Iadanoto S."/>
            <person name="Bubb K."/>
            <person name="Simms E."/>
            <person name="Levy R."/>
            <person name="Clendenning J."/>
            <person name="Kaul R."/>
            <person name="Kent W.J."/>
            <person name="Furey T.S."/>
            <person name="Baertsch R.A."/>
            <person name="Brent M.R."/>
            <person name="Keibler E."/>
            <person name="Flicek P."/>
            <person name="Bork P."/>
            <person name="Suyama M."/>
            <person name="Bailey J.A."/>
            <person name="Portnoy M.E."/>
            <person name="Torrents D."/>
            <person name="Chinwalla A.T."/>
            <person name="Gish W.R."/>
            <person name="Eddy S.R."/>
            <person name="McPherson J.D."/>
            <person name="Olson M.V."/>
            <person name="Eichler E.E."/>
            <person name="Green E.D."/>
            <person name="Waterston R.H."/>
            <person name="Wilson R.K."/>
        </authorList>
    </citation>
    <scope>NUCLEOTIDE SEQUENCE [LARGE SCALE GENOMIC DNA]</scope>
</reference>
<gene>
    <name evidence="3" type="primary">SPDYE18</name>
</gene>
<dbReference type="EMBL" id="AC007000">
    <property type="status" value="NOT_ANNOTATED_CDS"/>
    <property type="molecule type" value="Genomic_DNA"/>
</dbReference>
<dbReference type="CCDS" id="CCDS94131.1"/>
<dbReference type="RefSeq" id="NP_001381882.1">
    <property type="nucleotide sequence ID" value="NM_001394953.1"/>
</dbReference>
<dbReference type="RefSeq" id="XP_005250799.1">
    <property type="nucleotide sequence ID" value="XM_005250742.4"/>
</dbReference>
<dbReference type="RefSeq" id="XP_011547419.1">
    <property type="nucleotide sequence ID" value="XM_011549117.2"/>
</dbReference>
<dbReference type="SMR" id="P0DV79"/>
<dbReference type="PeptideAtlas" id="P0DV79"/>
<dbReference type="Ensembl" id="ENST00000510091.4">
    <property type="protein sequence ID" value="ENSP00000509550.1"/>
    <property type="gene ID" value="ENSG00000205482.11"/>
</dbReference>
<dbReference type="GeneID" id="100505767"/>
<dbReference type="MANE-Select" id="ENST00000510091.4">
    <property type="protein sequence ID" value="ENSP00000509550.1"/>
    <property type="RefSeq nucleotide sequence ID" value="NM_001394953.1"/>
    <property type="RefSeq protein sequence ID" value="NP_001381882.1"/>
</dbReference>
<dbReference type="AGR" id="HGNC:51514"/>
<dbReference type="GeneCards" id="SPDYE18"/>
<dbReference type="HGNC" id="HGNC:51514">
    <property type="gene designation" value="SPDYE18"/>
</dbReference>
<dbReference type="HPA" id="ENSG00000205482">
    <property type="expression patterns" value="Tissue enhanced (retina)"/>
</dbReference>
<dbReference type="GeneTree" id="ENSGT00940000154173"/>
<dbReference type="PRO" id="PR:P0DV79"/>
<dbReference type="Proteomes" id="UP000005640">
    <property type="component" value="Chromosome 7"/>
</dbReference>
<dbReference type="GO" id="GO:0019901">
    <property type="term" value="F:protein kinase binding"/>
    <property type="evidence" value="ECO:0000318"/>
    <property type="project" value="GO_Central"/>
</dbReference>
<dbReference type="InterPro" id="IPR020984">
    <property type="entry name" value="Speedy"/>
</dbReference>
<dbReference type="PANTHER" id="PTHR31156">
    <property type="entry name" value="WBSCR19-LIKE PROTEIN"/>
    <property type="match status" value="1"/>
</dbReference>
<dbReference type="Pfam" id="PF11357">
    <property type="entry name" value="Spy1"/>
    <property type="match status" value="1"/>
</dbReference>
<organism>
    <name type="scientific">Homo sapiens</name>
    <name type="common">Human</name>
    <dbReference type="NCBI Taxonomy" id="9606"/>
    <lineage>
        <taxon>Eukaryota</taxon>
        <taxon>Metazoa</taxon>
        <taxon>Chordata</taxon>
        <taxon>Craniata</taxon>
        <taxon>Vertebrata</taxon>
        <taxon>Euteleostomi</taxon>
        <taxon>Mammalia</taxon>
        <taxon>Eutheria</taxon>
        <taxon>Euarchontoglires</taxon>
        <taxon>Primates</taxon>
        <taxon>Haplorrhini</taxon>
        <taxon>Catarrhini</taxon>
        <taxon>Hominidae</taxon>
        <taxon>Homo</taxon>
    </lineage>
</organism>
<name>SPD18_HUMAN</name>
<keyword id="KW-1185">Reference proteome</keyword>
<accession>P0DV79</accession>
<feature type="chain" id="PRO_0000455536" description="Speedy protein E18">
    <location>
        <begin position="1"/>
        <end position="352"/>
    </location>
</feature>
<feature type="region of interest" description="Disordered" evidence="1">
    <location>
        <begin position="1"/>
        <end position="90"/>
    </location>
</feature>
<feature type="compositionally biased region" description="Basic residues" evidence="1">
    <location>
        <begin position="1"/>
        <end position="12"/>
    </location>
</feature>
<feature type="compositionally biased region" description="Polar residues" evidence="1">
    <location>
        <begin position="16"/>
        <end position="39"/>
    </location>
</feature>
<feature type="compositionally biased region" description="Acidic residues" evidence="1">
    <location>
        <begin position="76"/>
        <end position="90"/>
    </location>
</feature>
<evidence type="ECO:0000256" key="1">
    <source>
        <dbReference type="SAM" id="MobiDB-lite"/>
    </source>
</evidence>
<evidence type="ECO:0000305" key="2"/>
<evidence type="ECO:0000312" key="3">
    <source>
        <dbReference type="HGNC" id="HGNC:51514"/>
    </source>
</evidence>
<proteinExistence type="inferred from homology"/>
<protein>
    <recommendedName>
        <fullName evidence="2">Speedy protein E18</fullName>
    </recommendedName>
</protein>
<comment type="similarity">
    <text evidence="2">Belongs to the Speedy/Ringo family.</text>
</comment>